<proteinExistence type="evidence at protein level"/>
<organism>
    <name type="scientific">Arabidopsis thaliana</name>
    <name type="common">Mouse-ear cress</name>
    <dbReference type="NCBI Taxonomy" id="3702"/>
    <lineage>
        <taxon>Eukaryota</taxon>
        <taxon>Viridiplantae</taxon>
        <taxon>Streptophyta</taxon>
        <taxon>Embryophyta</taxon>
        <taxon>Tracheophyta</taxon>
        <taxon>Spermatophyta</taxon>
        <taxon>Magnoliopsida</taxon>
        <taxon>eudicotyledons</taxon>
        <taxon>Gunneridae</taxon>
        <taxon>Pentapetalae</taxon>
        <taxon>rosids</taxon>
        <taxon>malvids</taxon>
        <taxon>Brassicales</taxon>
        <taxon>Brassicaceae</taxon>
        <taxon>Camelineae</taxon>
        <taxon>Arabidopsis</taxon>
    </lineage>
</organism>
<feature type="chain" id="PRO_0000217040" description="Pyrophosphate-energized membrane proton pump 2">
    <location>
        <begin position="1"/>
        <end position="802"/>
    </location>
</feature>
<feature type="transmembrane region" description="Helical" evidence="2">
    <location>
        <begin position="45"/>
        <end position="65"/>
    </location>
</feature>
<feature type="transmembrane region" description="Helical" evidence="2">
    <location>
        <begin position="66"/>
        <end position="86"/>
    </location>
</feature>
<feature type="transmembrane region" description="Helical" evidence="2">
    <location>
        <begin position="118"/>
        <end position="138"/>
    </location>
</feature>
<feature type="transmembrane region" description="Helical" evidence="2">
    <location>
        <begin position="160"/>
        <end position="180"/>
    </location>
</feature>
<feature type="transmembrane region" description="Helical" evidence="2">
    <location>
        <begin position="206"/>
        <end position="226"/>
    </location>
</feature>
<feature type="transmembrane region" description="Helical" evidence="2">
    <location>
        <begin position="246"/>
        <end position="266"/>
    </location>
</feature>
<feature type="transmembrane region" description="Helical" evidence="2">
    <location>
        <begin position="348"/>
        <end position="368"/>
    </location>
</feature>
<feature type="transmembrane region" description="Helical" evidence="2">
    <location>
        <begin position="386"/>
        <end position="406"/>
    </location>
</feature>
<feature type="transmembrane region" description="Helical" evidence="2">
    <location>
        <begin position="421"/>
        <end position="441"/>
    </location>
</feature>
<feature type="transmembrane region" description="Helical" evidence="2">
    <location>
        <begin position="468"/>
        <end position="488"/>
    </location>
</feature>
<feature type="transmembrane region" description="Helical" evidence="2">
    <location>
        <begin position="511"/>
        <end position="531"/>
    </location>
</feature>
<feature type="transmembrane region" description="Helical" evidence="2">
    <location>
        <begin position="577"/>
        <end position="597"/>
    </location>
</feature>
<feature type="transmembrane region" description="Helical" evidence="2">
    <location>
        <begin position="615"/>
        <end position="635"/>
    </location>
</feature>
<feature type="transmembrane region" description="Helical" evidence="2">
    <location>
        <begin position="686"/>
        <end position="706"/>
    </location>
</feature>
<feature type="transmembrane region" description="Helical" evidence="2">
    <location>
        <begin position="716"/>
        <end position="736"/>
    </location>
</feature>
<feature type="transmembrane region" description="Helical" evidence="2">
    <location>
        <begin position="782"/>
        <end position="802"/>
    </location>
</feature>
<feature type="binding site" evidence="1">
    <location>
        <position position="273"/>
    </location>
    <ligand>
        <name>substrate</name>
    </ligand>
</feature>
<feature type="binding site" evidence="1">
    <location>
        <position position="276"/>
    </location>
    <ligand>
        <name>Mg(2+)</name>
        <dbReference type="ChEBI" id="CHEBI:18420"/>
        <label>1</label>
    </ligand>
</feature>
<feature type="binding site" evidence="1">
    <location>
        <position position="276"/>
    </location>
    <ligand>
        <name>Mg(2+)</name>
        <dbReference type="ChEBI" id="CHEBI:18420"/>
        <label>2</label>
    </ligand>
</feature>
<feature type="binding site" evidence="1">
    <location>
        <position position="280"/>
    </location>
    <ligand>
        <name>Mg(2+)</name>
        <dbReference type="ChEBI" id="CHEBI:18420"/>
        <label>1</label>
    </ligand>
</feature>
<feature type="binding site" evidence="1">
    <location>
        <position position="306"/>
    </location>
    <ligand>
        <name>Mg(2+)</name>
        <dbReference type="ChEBI" id="CHEBI:18420"/>
        <label>3</label>
    </ligand>
</feature>
<feature type="binding site" evidence="1">
    <location>
        <position position="541"/>
    </location>
    <ligand>
        <name>Mg(2+)</name>
        <dbReference type="ChEBI" id="CHEBI:18420"/>
        <label>3</label>
    </ligand>
</feature>
<feature type="binding site" evidence="1">
    <location>
        <position position="568"/>
    </location>
    <ligand>
        <name>Mg(2+)</name>
        <dbReference type="ChEBI" id="CHEBI:18420"/>
        <label>4</label>
    </ligand>
</feature>
<feature type="binding site" evidence="1">
    <location>
        <position position="743"/>
    </location>
    <ligand>
        <name>Mg(2+)</name>
        <dbReference type="ChEBI" id="CHEBI:18420"/>
        <label>4</label>
    </ligand>
</feature>
<feature type="binding site" evidence="1">
    <location>
        <position position="773"/>
    </location>
    <ligand>
        <name>Mg(2+)</name>
        <dbReference type="ChEBI" id="CHEBI:18420"/>
        <label>2</label>
    </ligand>
</feature>
<feature type="binding site" evidence="1">
    <location>
        <position position="776"/>
    </location>
    <ligand>
        <name>substrate</name>
    </ligand>
</feature>
<feature type="site" description="Important for proton transport" evidence="1">
    <location>
        <position position="310"/>
    </location>
</feature>
<feature type="site" description="Important for proton transport" evidence="1">
    <location>
        <position position="317"/>
    </location>
</feature>
<feature type="site" description="Important for proton transport" evidence="1">
    <location>
        <position position="777"/>
    </location>
</feature>
<feature type="site" description="Important for proton transport" evidence="1">
    <location>
        <position position="788"/>
    </location>
</feature>
<comment type="function">
    <text evidence="3">Pyrophosphatase active in both inorganic pyrophosphate hydrolysis and H(+) translocation.</text>
</comment>
<comment type="catalytic activity">
    <reaction evidence="7">
        <text>diphosphate + H2O + H(+)(in) = 2 phosphate + 2 H(+)(out)</text>
        <dbReference type="Rhea" id="RHEA:13973"/>
        <dbReference type="ChEBI" id="CHEBI:15377"/>
        <dbReference type="ChEBI" id="CHEBI:15378"/>
        <dbReference type="ChEBI" id="CHEBI:33019"/>
        <dbReference type="ChEBI" id="CHEBI:43474"/>
        <dbReference type="EC" id="7.1.3.1"/>
    </reaction>
    <physiologicalReaction direction="left-to-right" evidence="7">
        <dbReference type="Rhea" id="RHEA:13974"/>
    </physiologicalReaction>
</comment>
<comment type="activity regulation">
    <text evidence="3">Activated by Mg(+) but not by K(+). Inhibited by Ca(2+).</text>
</comment>
<comment type="biophysicochemical properties">
    <kinetics>
        <KM evidence="3">90 uM for PPi (at pH 8 and 37 degrees Celsius)</KM>
        <Vmax evidence="3">0.5 umol/min/mg enzyme (at pH 8 and 37 degrees Celsius)</Vmax>
    </kinetics>
</comment>
<comment type="subunit">
    <text>Monomer.</text>
</comment>
<comment type="subcellular location">
    <subcellularLocation>
        <location>Golgi apparatus membrane</location>
        <topology>Multi-pass membrane protein</topology>
    </subcellularLocation>
</comment>
<comment type="tissue specificity">
    <text evidence="3 4">Ubiquitous. Mostly expressed in cotyledons, roots and flowers. Especially high levels in trichomes, sepals and stamen filaments.</text>
</comment>
<comment type="similarity">
    <text evidence="6">Belongs to the H(+)-translocating pyrophosphatase (TC 3.A.10) family. K(+)-insensitive subfamily.</text>
</comment>
<comment type="caution">
    <text evidence="6">It is uncertain whether Met-1, Met-2 or Met-3 is the initiator.</text>
</comment>
<comment type="sequence caution" evidence="6">
    <conflict type="erroneous gene model prediction">
        <sequence resource="EMBL-CDS" id="AAC83018"/>
    </conflict>
</comment>
<comment type="sequence caution" evidence="6">
    <conflict type="erroneous initiation">
        <sequence resource="EMBL-CDS" id="AAF31163"/>
    </conflict>
</comment>
<comment type="sequence caution" evidence="6">
    <conflict type="erroneous initiation">
        <sequence resource="EMBL-CDS" id="AAF31164"/>
    </conflict>
</comment>
<comment type="sequence caution" evidence="6">
    <conflict type="frameshift">
        <sequence resource="EMBL-CDS" id="BAD94402"/>
    </conflict>
</comment>
<keyword id="KW-0333">Golgi apparatus</keyword>
<keyword id="KW-0375">Hydrogen ion transport</keyword>
<keyword id="KW-0406">Ion transport</keyword>
<keyword id="KW-0460">Magnesium</keyword>
<keyword id="KW-0472">Membrane</keyword>
<keyword id="KW-0479">Metal-binding</keyword>
<keyword id="KW-1185">Reference proteome</keyword>
<keyword id="KW-1278">Translocase</keyword>
<keyword id="KW-0812">Transmembrane</keyword>
<keyword id="KW-1133">Transmembrane helix</keyword>
<keyword id="KW-0813">Transport</keyword>
<protein>
    <recommendedName>
        <fullName>Pyrophosphate-energized membrane proton pump 2</fullName>
        <ecNumber evidence="7">7.1.3.1</ecNumber>
    </recommendedName>
    <alternativeName>
        <fullName>AVP1-like protein 1</fullName>
    </alternativeName>
    <alternativeName>
        <fullName>Pyrophosphate-energized inorganic pyrophosphatase 2</fullName>
        <shortName>H(+)-PPase 2</shortName>
    </alternativeName>
    <alternativeName>
        <fullName>Vacuolar proton pyrophosphatase 2</fullName>
    </alternativeName>
</protein>
<accession>Q56ZN6</accession>
<accession>Q9LDJ4</accession>
<accession>Q9MB70</accession>
<accession>Q9ZVB1</accession>
<dbReference type="EC" id="7.1.3.1" evidence="7"/>
<dbReference type="EMBL" id="AF182813">
    <property type="protein sequence ID" value="AAF31163.1"/>
    <property type="status" value="ALT_INIT"/>
    <property type="molecule type" value="mRNA"/>
</dbReference>
<dbReference type="EMBL" id="AF184917">
    <property type="protein sequence ID" value="AAF31164.1"/>
    <property type="status" value="ALT_INIT"/>
    <property type="molecule type" value="Genomic_DNA"/>
</dbReference>
<dbReference type="EMBL" id="AB034696">
    <property type="protein sequence ID" value="BAA92151.1"/>
    <property type="molecule type" value="mRNA"/>
</dbReference>
<dbReference type="EMBL" id="AC005679">
    <property type="protein sequence ID" value="AAC83018.1"/>
    <property type="status" value="ALT_SEQ"/>
    <property type="molecule type" value="Genomic_DNA"/>
</dbReference>
<dbReference type="EMBL" id="CP002684">
    <property type="protein sequence ID" value="AEE36177.1"/>
    <property type="molecule type" value="Genomic_DNA"/>
</dbReference>
<dbReference type="EMBL" id="CP002684">
    <property type="protein sequence ID" value="AEE36178.1"/>
    <property type="molecule type" value="Genomic_DNA"/>
</dbReference>
<dbReference type="EMBL" id="CP002684">
    <property type="protein sequence ID" value="ANM60408.1"/>
    <property type="molecule type" value="Genomic_DNA"/>
</dbReference>
<dbReference type="EMBL" id="AY054485">
    <property type="protein sequence ID" value="AAK96676.1"/>
    <property type="molecule type" value="mRNA"/>
</dbReference>
<dbReference type="EMBL" id="BT010353">
    <property type="protein sequence ID" value="AAQ56796.1"/>
    <property type="molecule type" value="mRNA"/>
</dbReference>
<dbReference type="EMBL" id="AK220927">
    <property type="protein sequence ID" value="BAD94402.1"/>
    <property type="status" value="ALT_SEQ"/>
    <property type="molecule type" value="mRNA"/>
</dbReference>
<dbReference type="PIR" id="H96818">
    <property type="entry name" value="H96818"/>
</dbReference>
<dbReference type="RefSeq" id="NP_001117619.1">
    <property type="nucleotide sequence ID" value="NM_001124147.1"/>
</dbReference>
<dbReference type="RefSeq" id="NP_001322698.1">
    <property type="nucleotide sequence ID" value="NM_001334854.1"/>
</dbReference>
<dbReference type="RefSeq" id="NP_565195.1">
    <property type="nucleotide sequence ID" value="NM_106541.4"/>
</dbReference>
<dbReference type="SMR" id="Q56ZN6"/>
<dbReference type="BioGRID" id="29450">
    <property type="interactions" value="29"/>
</dbReference>
<dbReference type="FunCoup" id="Q56ZN6">
    <property type="interactions" value="1267"/>
</dbReference>
<dbReference type="IntAct" id="Q56ZN6">
    <property type="interactions" value="28"/>
</dbReference>
<dbReference type="STRING" id="3702.Q56ZN6"/>
<dbReference type="TCDB" id="3.A.10.2.3">
    <property type="family name" value="the h(+), na(+)-translocating pyrophosphatase (m(+)-ppase) family"/>
</dbReference>
<dbReference type="SwissPalm" id="Q56ZN6"/>
<dbReference type="PaxDb" id="3702-AT1G78920.2"/>
<dbReference type="ProteomicsDB" id="241154"/>
<dbReference type="EnsemblPlants" id="AT1G78920.1">
    <property type="protein sequence ID" value="AT1G78920.1"/>
    <property type="gene ID" value="AT1G78920"/>
</dbReference>
<dbReference type="EnsemblPlants" id="AT1G78920.2">
    <property type="protein sequence ID" value="AT1G78920.2"/>
    <property type="gene ID" value="AT1G78920"/>
</dbReference>
<dbReference type="EnsemblPlants" id="AT1G78920.3">
    <property type="protein sequence ID" value="AT1G78920.3"/>
    <property type="gene ID" value="AT1G78920"/>
</dbReference>
<dbReference type="GeneID" id="844231"/>
<dbReference type="Gramene" id="AT1G78920.1">
    <property type="protein sequence ID" value="AT1G78920.1"/>
    <property type="gene ID" value="AT1G78920"/>
</dbReference>
<dbReference type="Gramene" id="AT1G78920.2">
    <property type="protein sequence ID" value="AT1G78920.2"/>
    <property type="gene ID" value="AT1G78920"/>
</dbReference>
<dbReference type="Gramene" id="AT1G78920.3">
    <property type="protein sequence ID" value="AT1G78920.3"/>
    <property type="gene ID" value="AT1G78920"/>
</dbReference>
<dbReference type="KEGG" id="ath:AT1G78920"/>
<dbReference type="Araport" id="AT1G78920"/>
<dbReference type="TAIR" id="AT1G78920">
    <property type="gene designation" value="VP2"/>
</dbReference>
<dbReference type="eggNOG" id="ENOG502QPJC">
    <property type="taxonomic scope" value="Eukaryota"/>
</dbReference>
<dbReference type="HOGENOM" id="CLU_008743_3_1_1"/>
<dbReference type="InParanoid" id="Q56ZN6"/>
<dbReference type="OMA" id="MATTAMQ"/>
<dbReference type="PhylomeDB" id="Q56ZN6"/>
<dbReference type="BioCyc" id="ARA:AT1G78920-MONOMER"/>
<dbReference type="BRENDA" id="7.1.3.1">
    <property type="organism ID" value="399"/>
</dbReference>
<dbReference type="SABIO-RK" id="Q56ZN6"/>
<dbReference type="PRO" id="PR:Q56ZN6"/>
<dbReference type="Proteomes" id="UP000006548">
    <property type="component" value="Chromosome 1"/>
</dbReference>
<dbReference type="ExpressionAtlas" id="Q56ZN6">
    <property type="expression patterns" value="baseline and differential"/>
</dbReference>
<dbReference type="GO" id="GO:0005768">
    <property type="term" value="C:endosome"/>
    <property type="evidence" value="ECO:0007005"/>
    <property type="project" value="TAIR"/>
</dbReference>
<dbReference type="GO" id="GO:0005794">
    <property type="term" value="C:Golgi apparatus"/>
    <property type="evidence" value="ECO:0000314"/>
    <property type="project" value="TAIR"/>
</dbReference>
<dbReference type="GO" id="GO:0000137">
    <property type="term" value="C:Golgi cis cisterna"/>
    <property type="evidence" value="ECO:0007005"/>
    <property type="project" value="TAIR"/>
</dbReference>
<dbReference type="GO" id="GO:0000139">
    <property type="term" value="C:Golgi membrane"/>
    <property type="evidence" value="ECO:0007669"/>
    <property type="project" value="UniProtKB-SubCell"/>
</dbReference>
<dbReference type="GO" id="GO:0005802">
    <property type="term" value="C:trans-Golgi network"/>
    <property type="evidence" value="ECO:0007005"/>
    <property type="project" value="TAIR"/>
</dbReference>
<dbReference type="GO" id="GO:0005773">
    <property type="term" value="C:vacuole"/>
    <property type="evidence" value="ECO:0007005"/>
    <property type="project" value="TAIR"/>
</dbReference>
<dbReference type="GO" id="GO:0009678">
    <property type="term" value="F:diphosphate hydrolysis-driven proton transmembrane transporter activity"/>
    <property type="evidence" value="ECO:0000314"/>
    <property type="project" value="TAIR"/>
</dbReference>
<dbReference type="GO" id="GO:0004427">
    <property type="term" value="F:inorganic diphosphate phosphatase activity"/>
    <property type="evidence" value="ECO:0007669"/>
    <property type="project" value="InterPro"/>
</dbReference>
<dbReference type="GO" id="GO:0046872">
    <property type="term" value="F:metal ion binding"/>
    <property type="evidence" value="ECO:0007669"/>
    <property type="project" value="UniProtKB-KW"/>
</dbReference>
<dbReference type="HAMAP" id="MF_01129">
    <property type="entry name" value="PPase_energized_pump"/>
    <property type="match status" value="1"/>
</dbReference>
<dbReference type="InterPro" id="IPR004131">
    <property type="entry name" value="PPase-energised_H-pump"/>
</dbReference>
<dbReference type="NCBIfam" id="NF001953">
    <property type="entry name" value="PRK00733.2-1"/>
    <property type="match status" value="1"/>
</dbReference>
<dbReference type="NCBIfam" id="NF001960">
    <property type="entry name" value="PRK00733.3-5"/>
    <property type="match status" value="1"/>
</dbReference>
<dbReference type="NCBIfam" id="TIGR01104">
    <property type="entry name" value="V_PPase"/>
    <property type="match status" value="1"/>
</dbReference>
<dbReference type="PANTHER" id="PTHR31998">
    <property type="entry name" value="K(+)-INSENSITIVE PYROPHOSPHATE-ENERGIZED PROTON PUMP"/>
    <property type="match status" value="1"/>
</dbReference>
<dbReference type="Pfam" id="PF03030">
    <property type="entry name" value="H_PPase"/>
    <property type="match status" value="1"/>
</dbReference>
<dbReference type="PIRSF" id="PIRSF001265">
    <property type="entry name" value="H+-PPase"/>
    <property type="match status" value="1"/>
</dbReference>
<sequence length="802" mass="85133">MMMDEDVEQASLMSFNDRPRAFPNMRSKTYSPLIFRIIRKLNVRVLSIILLFCFGAIFYMGASTSPIIVFVFTVCIISFLLSIYLTKWVLAKDEGPPEMVEISDAIRDGAEGFFRTQYSTISKMAILLAFVILCIYLFRSLTPQQEAAGLGRAMSAYITVAAFLLGALCSGIAGYVGMWVSVRANVRVSSAARRSAREALQIAVRAGGFSALVVVGMAVIGIAILYSTFYVWLGVGSPGSMNVTDLPLLLVGYGFGASFVALFAQLGGGIYTKGADVGADLVGKVEQGIPEDDPRNPAVIADLVGDNVGDCAARGADLFESIAAEIISAMILGGTMAKKCKIEDPSGFILFPLVVHSFDLIISSIGILSIKGTRDASVKSPVEDPMAVLQKGYSLTIILAVITFGASTRWLLYTEQAPSAWFNFALCGLVGIITAYIFVWISKYYTDYKHEPVRTLALASSTGHGTNIIAGVSLGLESTALPVLTISVAIISAYWLGNTSGLVDENGIPTGGLFGTAVATMGMLSTAAYVLTMDMFGPIADNAGGIVEMSQQPESVREITDLLDAVGNTTKATTKGFAIGSAALASFLLFSAYMDEVSAFANVSFKEVDIAIPEVFVGGLLGAMLIFLFSAWACAAVGRTAQEVVNEVRRQFIERPGIMEYKEKPDYSRCVAIVASAALREMIKPGALAIASPIVVGLVFRILGYYTGQPLLGAKVVASMLMFATVCGILMALFLNTAGGAWDNAKKYIETGALGGKGSEAHKAAVTGDTVGDPFKDTAGPSIHVLIKMLATITLVMAPVFL</sequence>
<reference key="1">
    <citation type="journal article" date="2000" name="Plant Physiol.">
        <title>AVP2, a sequence-divergent, K(+)-insensitive H(+)-translocating inorganic pyrophosphatase from Arabidopsis.</title>
        <authorList>
            <person name="Drozdowicz Y.M."/>
            <person name="Kissinger J.C."/>
            <person name="Rea P.A."/>
        </authorList>
    </citation>
    <scope>NUCLEOTIDE SEQUENCE [GENOMIC DNA / MRNA]</scope>
    <scope>FUNCTION</scope>
    <scope>CATALYTIC ACTIVITY</scope>
    <scope>ACTIVITY REGULATION</scope>
    <scope>TISSUE SPECIFICITY</scope>
    <scope>BIOPHYSICOCHEMICAL PROPERTIES</scope>
    <source>
        <strain>cv. Columbia</strain>
    </source>
</reference>
<reference key="2">
    <citation type="online journal article" date="2000" name="Plant Gene Register">
        <title>Isolation of a cDNA for a H+-pyrophosphatase-like protein from Arabidopsis thaliana and its functional expression in yeast.</title>
        <authorList>
            <person name="Nakanishi Y."/>
            <person name="Maeshima M."/>
        </authorList>
        <locator>PGR00-026</locator>
    </citation>
    <scope>NUCLEOTIDE SEQUENCE [MRNA]</scope>
</reference>
<reference key="3">
    <citation type="journal article" date="2000" name="Nature">
        <title>Sequence and analysis of chromosome 1 of the plant Arabidopsis thaliana.</title>
        <authorList>
            <person name="Theologis A."/>
            <person name="Ecker J.R."/>
            <person name="Palm C.J."/>
            <person name="Federspiel N.A."/>
            <person name="Kaul S."/>
            <person name="White O."/>
            <person name="Alonso J."/>
            <person name="Altafi H."/>
            <person name="Araujo R."/>
            <person name="Bowman C.L."/>
            <person name="Brooks S.Y."/>
            <person name="Buehler E."/>
            <person name="Chan A."/>
            <person name="Chao Q."/>
            <person name="Chen H."/>
            <person name="Cheuk R.F."/>
            <person name="Chin C.W."/>
            <person name="Chung M.K."/>
            <person name="Conn L."/>
            <person name="Conway A.B."/>
            <person name="Conway A.R."/>
            <person name="Creasy T.H."/>
            <person name="Dewar K."/>
            <person name="Dunn P."/>
            <person name="Etgu P."/>
            <person name="Feldblyum T.V."/>
            <person name="Feng J.-D."/>
            <person name="Fong B."/>
            <person name="Fujii C.Y."/>
            <person name="Gill J.E."/>
            <person name="Goldsmith A.D."/>
            <person name="Haas B."/>
            <person name="Hansen N.F."/>
            <person name="Hughes B."/>
            <person name="Huizar L."/>
            <person name="Hunter J.L."/>
            <person name="Jenkins J."/>
            <person name="Johnson-Hopson C."/>
            <person name="Khan S."/>
            <person name="Khaykin E."/>
            <person name="Kim C.J."/>
            <person name="Koo H.L."/>
            <person name="Kremenetskaia I."/>
            <person name="Kurtz D.B."/>
            <person name="Kwan A."/>
            <person name="Lam B."/>
            <person name="Langin-Hooper S."/>
            <person name="Lee A."/>
            <person name="Lee J.M."/>
            <person name="Lenz C.A."/>
            <person name="Li J.H."/>
            <person name="Li Y.-P."/>
            <person name="Lin X."/>
            <person name="Liu S.X."/>
            <person name="Liu Z.A."/>
            <person name="Luros J.S."/>
            <person name="Maiti R."/>
            <person name="Marziali A."/>
            <person name="Militscher J."/>
            <person name="Miranda M."/>
            <person name="Nguyen M."/>
            <person name="Nierman W.C."/>
            <person name="Osborne B.I."/>
            <person name="Pai G."/>
            <person name="Peterson J."/>
            <person name="Pham P.K."/>
            <person name="Rizzo M."/>
            <person name="Rooney T."/>
            <person name="Rowley D."/>
            <person name="Sakano H."/>
            <person name="Salzberg S.L."/>
            <person name="Schwartz J.R."/>
            <person name="Shinn P."/>
            <person name="Southwick A.M."/>
            <person name="Sun H."/>
            <person name="Tallon L.J."/>
            <person name="Tambunga G."/>
            <person name="Toriumi M.J."/>
            <person name="Town C.D."/>
            <person name="Utterback T."/>
            <person name="Van Aken S."/>
            <person name="Vaysberg M."/>
            <person name="Vysotskaia V.S."/>
            <person name="Walker M."/>
            <person name="Wu D."/>
            <person name="Yu G."/>
            <person name="Fraser C.M."/>
            <person name="Venter J.C."/>
            <person name="Davis R.W."/>
        </authorList>
    </citation>
    <scope>NUCLEOTIDE SEQUENCE [LARGE SCALE GENOMIC DNA]</scope>
    <source>
        <strain>cv. Columbia</strain>
    </source>
</reference>
<reference key="4">
    <citation type="journal article" date="2017" name="Plant J.">
        <title>Araport11: a complete reannotation of the Arabidopsis thaliana reference genome.</title>
        <authorList>
            <person name="Cheng C.Y."/>
            <person name="Krishnakumar V."/>
            <person name="Chan A.P."/>
            <person name="Thibaud-Nissen F."/>
            <person name="Schobel S."/>
            <person name="Town C.D."/>
        </authorList>
    </citation>
    <scope>GENOME REANNOTATION</scope>
    <source>
        <strain>cv. Columbia</strain>
    </source>
</reference>
<reference key="5">
    <citation type="journal article" date="2003" name="Science">
        <title>Empirical analysis of transcriptional activity in the Arabidopsis genome.</title>
        <authorList>
            <person name="Yamada K."/>
            <person name="Lim J."/>
            <person name="Dale J.M."/>
            <person name="Chen H."/>
            <person name="Shinn P."/>
            <person name="Palm C.J."/>
            <person name="Southwick A.M."/>
            <person name="Wu H.C."/>
            <person name="Kim C.J."/>
            <person name="Nguyen M."/>
            <person name="Pham P.K."/>
            <person name="Cheuk R.F."/>
            <person name="Karlin-Newmann G."/>
            <person name="Liu S.X."/>
            <person name="Lam B."/>
            <person name="Sakano H."/>
            <person name="Wu T."/>
            <person name="Yu G."/>
            <person name="Miranda M."/>
            <person name="Quach H.L."/>
            <person name="Tripp M."/>
            <person name="Chang C.H."/>
            <person name="Lee J.M."/>
            <person name="Toriumi M.J."/>
            <person name="Chan M.M."/>
            <person name="Tang C.C."/>
            <person name="Onodera C.S."/>
            <person name="Deng J.M."/>
            <person name="Akiyama K."/>
            <person name="Ansari Y."/>
            <person name="Arakawa T."/>
            <person name="Banh J."/>
            <person name="Banno F."/>
            <person name="Bowser L."/>
            <person name="Brooks S.Y."/>
            <person name="Carninci P."/>
            <person name="Chao Q."/>
            <person name="Choy N."/>
            <person name="Enju A."/>
            <person name="Goldsmith A.D."/>
            <person name="Gurjal M."/>
            <person name="Hansen N.F."/>
            <person name="Hayashizaki Y."/>
            <person name="Johnson-Hopson C."/>
            <person name="Hsuan V.W."/>
            <person name="Iida K."/>
            <person name="Karnes M."/>
            <person name="Khan S."/>
            <person name="Koesema E."/>
            <person name="Ishida J."/>
            <person name="Jiang P.X."/>
            <person name="Jones T."/>
            <person name="Kawai J."/>
            <person name="Kamiya A."/>
            <person name="Meyers C."/>
            <person name="Nakajima M."/>
            <person name="Narusaka M."/>
            <person name="Seki M."/>
            <person name="Sakurai T."/>
            <person name="Satou M."/>
            <person name="Tamse R."/>
            <person name="Vaysberg M."/>
            <person name="Wallender E.K."/>
            <person name="Wong C."/>
            <person name="Yamamura Y."/>
            <person name="Yuan S."/>
            <person name="Shinozaki K."/>
            <person name="Davis R.W."/>
            <person name="Theologis A."/>
            <person name="Ecker J.R."/>
        </authorList>
    </citation>
    <scope>NUCLEOTIDE SEQUENCE [LARGE SCALE MRNA]</scope>
    <source>
        <strain>cv. Columbia</strain>
    </source>
</reference>
<reference key="6">
    <citation type="submission" date="2005-03" db="EMBL/GenBank/DDBJ databases">
        <title>Large-scale analysis of RIKEN Arabidopsis full-length (RAFL) cDNAs.</title>
        <authorList>
            <person name="Totoki Y."/>
            <person name="Seki M."/>
            <person name="Ishida J."/>
            <person name="Nakajima M."/>
            <person name="Enju A."/>
            <person name="Kamiya A."/>
            <person name="Narusaka M."/>
            <person name="Shin-i T."/>
            <person name="Nakagawa M."/>
            <person name="Sakamoto N."/>
            <person name="Oishi K."/>
            <person name="Kohara Y."/>
            <person name="Kobayashi M."/>
            <person name="Toyoda A."/>
            <person name="Sakaki Y."/>
            <person name="Sakurai T."/>
            <person name="Iida K."/>
            <person name="Akiyama K."/>
            <person name="Satou M."/>
            <person name="Toyoda T."/>
            <person name="Konagaya A."/>
            <person name="Carninci P."/>
            <person name="Kawai J."/>
            <person name="Hayashizaki Y."/>
            <person name="Shinozaki K."/>
        </authorList>
    </citation>
    <scope>NUCLEOTIDE SEQUENCE [LARGE SCALE MRNA] OF 502-801</scope>
    <source>
        <strain>cv. Columbia</strain>
    </source>
</reference>
<reference key="7">
    <citation type="journal article" date="2001" name="FEBS Lett.">
        <title>Novel type Arabidopsis thaliana H(+)-PPase is localized to the Golgi apparatus.</title>
        <authorList>
            <person name="Mitsuda N."/>
            <person name="Enami K."/>
            <person name="Nakata M."/>
            <person name="Takeyasu K."/>
            <person name="Sato M.H."/>
        </authorList>
    </citation>
    <scope>TISSUE SPECIFICITY</scope>
    <scope>SUBCELLULAR LOCATION</scope>
</reference>
<name>AVP2_ARATH</name>
<gene>
    <name type="primary">AVPL1</name>
    <name evidence="5" type="synonym">AVP2</name>
    <name type="ordered locus">At1g78920</name>
    <name type="ORF">F9K20.2</name>
</gene>
<evidence type="ECO:0000250" key="1"/>
<evidence type="ECO:0000255" key="2"/>
<evidence type="ECO:0000269" key="3">
    <source>
    </source>
</evidence>
<evidence type="ECO:0000269" key="4">
    <source>
    </source>
</evidence>
<evidence type="ECO:0000303" key="5">
    <source>
    </source>
</evidence>
<evidence type="ECO:0000305" key="6"/>
<evidence type="ECO:0000305" key="7">
    <source>
    </source>
</evidence>